<reference key="1">
    <citation type="journal article" date="2004" name="Proc. Natl. Acad. Sci. U.S.A.">
        <title>The complete genomic sequence of Nocardia farcinica IFM 10152.</title>
        <authorList>
            <person name="Ishikawa J."/>
            <person name="Yamashita A."/>
            <person name="Mikami Y."/>
            <person name="Hoshino Y."/>
            <person name="Kurita H."/>
            <person name="Hotta K."/>
            <person name="Shiba T."/>
            <person name="Hattori M."/>
        </authorList>
    </citation>
    <scope>NUCLEOTIDE SEQUENCE [LARGE SCALE GENOMIC DNA]</scope>
    <source>
        <strain>IFM 10152</strain>
    </source>
</reference>
<accession>Q5YRK2</accession>
<evidence type="ECO:0000255" key="1">
    <source>
        <dbReference type="HAMAP-Rule" id="MF_01724"/>
    </source>
</evidence>
<organism>
    <name type="scientific">Nocardia farcinica (strain IFM 10152)</name>
    <dbReference type="NCBI Taxonomy" id="247156"/>
    <lineage>
        <taxon>Bacteria</taxon>
        <taxon>Bacillati</taxon>
        <taxon>Actinomycetota</taxon>
        <taxon>Actinomycetes</taxon>
        <taxon>Mycobacteriales</taxon>
        <taxon>Nocardiaceae</taxon>
        <taxon>Nocardia</taxon>
    </lineage>
</organism>
<keyword id="KW-0067">ATP-binding</keyword>
<keyword id="KW-1003">Cell membrane</keyword>
<keyword id="KW-0472">Membrane</keyword>
<keyword id="KW-0547">Nucleotide-binding</keyword>
<keyword id="KW-1185">Reference proteome</keyword>
<keyword id="KW-1278">Translocase</keyword>
<keyword id="KW-0813">Transport</keyword>
<dbReference type="EC" id="7.6.2.14" evidence="1"/>
<dbReference type="EMBL" id="AP006618">
    <property type="protein sequence ID" value="BAD59189.1"/>
    <property type="molecule type" value="Genomic_DNA"/>
</dbReference>
<dbReference type="SMR" id="Q5YRK2"/>
<dbReference type="STRING" id="247156.NFA_43400"/>
<dbReference type="KEGG" id="nfa:NFA_43400"/>
<dbReference type="eggNOG" id="COG1116">
    <property type="taxonomic scope" value="Bacteria"/>
</dbReference>
<dbReference type="HOGENOM" id="CLU_000604_1_22_11"/>
<dbReference type="OrthoDB" id="8773773at2"/>
<dbReference type="Proteomes" id="UP000006820">
    <property type="component" value="Chromosome"/>
</dbReference>
<dbReference type="GO" id="GO:0005886">
    <property type="term" value="C:plasma membrane"/>
    <property type="evidence" value="ECO:0007669"/>
    <property type="project" value="UniProtKB-SubCell"/>
</dbReference>
<dbReference type="GO" id="GO:0005524">
    <property type="term" value="F:ATP binding"/>
    <property type="evidence" value="ECO:0007669"/>
    <property type="project" value="UniProtKB-KW"/>
</dbReference>
<dbReference type="GO" id="GO:0016887">
    <property type="term" value="F:ATP hydrolysis activity"/>
    <property type="evidence" value="ECO:0007669"/>
    <property type="project" value="InterPro"/>
</dbReference>
<dbReference type="Gene3D" id="3.40.50.300">
    <property type="entry name" value="P-loop containing nucleotide triphosphate hydrolases"/>
    <property type="match status" value="1"/>
</dbReference>
<dbReference type="InterPro" id="IPR003593">
    <property type="entry name" value="AAA+_ATPase"/>
</dbReference>
<dbReference type="InterPro" id="IPR003439">
    <property type="entry name" value="ABC_transporter-like_ATP-bd"/>
</dbReference>
<dbReference type="InterPro" id="IPR017871">
    <property type="entry name" value="ABC_transporter-like_CS"/>
</dbReference>
<dbReference type="InterPro" id="IPR050166">
    <property type="entry name" value="ABC_transporter_ATP-bind"/>
</dbReference>
<dbReference type="InterPro" id="IPR027417">
    <property type="entry name" value="P-loop_NTPase"/>
</dbReference>
<dbReference type="PANTHER" id="PTHR42788:SF17">
    <property type="entry name" value="ALIPHATIC SULFONATES IMPORT ATP-BINDING PROTEIN SSUB"/>
    <property type="match status" value="1"/>
</dbReference>
<dbReference type="PANTHER" id="PTHR42788">
    <property type="entry name" value="TAURINE IMPORT ATP-BINDING PROTEIN-RELATED"/>
    <property type="match status" value="1"/>
</dbReference>
<dbReference type="Pfam" id="PF00005">
    <property type="entry name" value="ABC_tran"/>
    <property type="match status" value="1"/>
</dbReference>
<dbReference type="SMART" id="SM00382">
    <property type="entry name" value="AAA"/>
    <property type="match status" value="1"/>
</dbReference>
<dbReference type="SUPFAM" id="SSF52540">
    <property type="entry name" value="P-loop containing nucleoside triphosphate hydrolases"/>
    <property type="match status" value="1"/>
</dbReference>
<dbReference type="PROSITE" id="PS00211">
    <property type="entry name" value="ABC_TRANSPORTER_1"/>
    <property type="match status" value="1"/>
</dbReference>
<dbReference type="PROSITE" id="PS50893">
    <property type="entry name" value="ABC_TRANSPORTER_2"/>
    <property type="match status" value="1"/>
</dbReference>
<dbReference type="PROSITE" id="PS51291">
    <property type="entry name" value="SSUB"/>
    <property type="match status" value="1"/>
</dbReference>
<proteinExistence type="inferred from homology"/>
<comment type="function">
    <text evidence="1">Part of the ABC transporter complex SsuABC involved in aliphatic sulfonates import. Responsible for energy coupling to the transport system.</text>
</comment>
<comment type="catalytic activity">
    <reaction evidence="1">
        <text>ATP + H2O + aliphatic sulfonate-[sulfonate-binding protein]Side 1 = ADP + phosphate + aliphatic sulfonateSide 2 + [sulfonate-binding protein]Side 1.</text>
        <dbReference type="EC" id="7.6.2.14"/>
    </reaction>
</comment>
<comment type="subunit">
    <text evidence="1">The complex is composed of two ATP-binding proteins (SsuB), two transmembrane proteins (SsuC) and a solute-binding protein (SsuA).</text>
</comment>
<comment type="subcellular location">
    <subcellularLocation>
        <location evidence="1">Cell membrane</location>
        <topology evidence="1">Peripheral membrane protein</topology>
    </subcellularLocation>
</comment>
<comment type="similarity">
    <text evidence="1">Belongs to the ABC transporter superfamily. Aliphatic sulfonates importer (TC 3.A.1.17.2) family.</text>
</comment>
<sequence>MMAGSTTTTTAAVRVRGAGRAFAGRQVLRGVDLDIAPGEFVALLGASGSGKSTLLRAIGGLDRGFTGTLEAPRSKAIVFQEHRLIPWISVWRNVVLGVRGRDLAARARTALDEVGLSAEADAWPATLSGGEAQRVALARALVRHPDLLLLDEPFGALDALTRLKAQALVARLWQQHRPAVLLVTHDVEEALLLADRALVLRDGRIAESFDITVTRPRSVVDPEFSALRRRLLLALGVDPDAPTGAQS</sequence>
<gene>
    <name evidence="1" type="primary">ssuB3</name>
    <name type="ordered locus">NFA_43400</name>
</gene>
<protein>
    <recommendedName>
        <fullName evidence="1">Aliphatic sulfonates import ATP-binding protein SsuB 3</fullName>
        <ecNumber evidence="1">7.6.2.14</ecNumber>
    </recommendedName>
</protein>
<feature type="chain" id="PRO_0000279924" description="Aliphatic sulfonates import ATP-binding protein SsuB 3">
    <location>
        <begin position="1"/>
        <end position="247"/>
    </location>
</feature>
<feature type="domain" description="ABC transporter" evidence="1">
    <location>
        <begin position="13"/>
        <end position="227"/>
    </location>
</feature>
<feature type="binding site" evidence="1">
    <location>
        <begin position="45"/>
        <end position="52"/>
    </location>
    <ligand>
        <name>ATP</name>
        <dbReference type="ChEBI" id="CHEBI:30616"/>
    </ligand>
</feature>
<name>SSUB3_NOCFA</name>